<keyword id="KW-0687">Ribonucleoprotein</keyword>
<keyword id="KW-0689">Ribosomal protein</keyword>
<organism>
    <name type="scientific">Variovorax paradoxus (strain S110)</name>
    <dbReference type="NCBI Taxonomy" id="543728"/>
    <lineage>
        <taxon>Bacteria</taxon>
        <taxon>Pseudomonadati</taxon>
        <taxon>Pseudomonadota</taxon>
        <taxon>Betaproteobacteria</taxon>
        <taxon>Burkholderiales</taxon>
        <taxon>Comamonadaceae</taxon>
        <taxon>Variovorax</taxon>
    </lineage>
</organism>
<dbReference type="EMBL" id="CP001635">
    <property type="protein sequence ID" value="ACS21646.1"/>
    <property type="molecule type" value="Genomic_DNA"/>
</dbReference>
<dbReference type="SMR" id="C5CQ74"/>
<dbReference type="STRING" id="543728.Vapar_5044"/>
<dbReference type="KEGG" id="vap:Vapar_5044"/>
<dbReference type="eggNOG" id="COG0203">
    <property type="taxonomic scope" value="Bacteria"/>
</dbReference>
<dbReference type="HOGENOM" id="CLU_074407_2_0_4"/>
<dbReference type="OrthoDB" id="9809073at2"/>
<dbReference type="GO" id="GO:0022625">
    <property type="term" value="C:cytosolic large ribosomal subunit"/>
    <property type="evidence" value="ECO:0007669"/>
    <property type="project" value="TreeGrafter"/>
</dbReference>
<dbReference type="GO" id="GO:0003735">
    <property type="term" value="F:structural constituent of ribosome"/>
    <property type="evidence" value="ECO:0007669"/>
    <property type="project" value="InterPro"/>
</dbReference>
<dbReference type="GO" id="GO:0006412">
    <property type="term" value="P:translation"/>
    <property type="evidence" value="ECO:0007669"/>
    <property type="project" value="UniProtKB-UniRule"/>
</dbReference>
<dbReference type="FunFam" id="3.90.1030.10:FF:000001">
    <property type="entry name" value="50S ribosomal protein L17"/>
    <property type="match status" value="1"/>
</dbReference>
<dbReference type="Gene3D" id="3.90.1030.10">
    <property type="entry name" value="Ribosomal protein L17"/>
    <property type="match status" value="1"/>
</dbReference>
<dbReference type="HAMAP" id="MF_01368">
    <property type="entry name" value="Ribosomal_bL17"/>
    <property type="match status" value="1"/>
</dbReference>
<dbReference type="InterPro" id="IPR000456">
    <property type="entry name" value="Ribosomal_bL17"/>
</dbReference>
<dbReference type="InterPro" id="IPR047859">
    <property type="entry name" value="Ribosomal_bL17_CS"/>
</dbReference>
<dbReference type="InterPro" id="IPR036373">
    <property type="entry name" value="Ribosomal_bL17_sf"/>
</dbReference>
<dbReference type="NCBIfam" id="TIGR00059">
    <property type="entry name" value="L17"/>
    <property type="match status" value="1"/>
</dbReference>
<dbReference type="PANTHER" id="PTHR14413:SF16">
    <property type="entry name" value="LARGE RIBOSOMAL SUBUNIT PROTEIN BL17M"/>
    <property type="match status" value="1"/>
</dbReference>
<dbReference type="PANTHER" id="PTHR14413">
    <property type="entry name" value="RIBOSOMAL PROTEIN L17"/>
    <property type="match status" value="1"/>
</dbReference>
<dbReference type="Pfam" id="PF01196">
    <property type="entry name" value="Ribosomal_L17"/>
    <property type="match status" value="1"/>
</dbReference>
<dbReference type="SUPFAM" id="SSF64263">
    <property type="entry name" value="Prokaryotic ribosomal protein L17"/>
    <property type="match status" value="1"/>
</dbReference>
<dbReference type="PROSITE" id="PS01167">
    <property type="entry name" value="RIBOSOMAL_L17"/>
    <property type="match status" value="1"/>
</dbReference>
<evidence type="ECO:0000255" key="1">
    <source>
        <dbReference type="HAMAP-Rule" id="MF_01368"/>
    </source>
</evidence>
<evidence type="ECO:0000305" key="2"/>
<reference key="1">
    <citation type="journal article" date="2011" name="J. Bacteriol.">
        <title>Complete genome sequence of the metabolically versatile plant growth-promoting endophyte, Variovorax paradoxus S110.</title>
        <authorList>
            <person name="Han J.I."/>
            <person name="Choi H.K."/>
            <person name="Lee S.W."/>
            <person name="Orwin P.M."/>
            <person name="Kim J."/>
            <person name="Laroe S.L."/>
            <person name="Kim T.G."/>
            <person name="O'Neil J."/>
            <person name="Leadbetter J.R."/>
            <person name="Lee S.Y."/>
            <person name="Hur C.G."/>
            <person name="Spain J.C."/>
            <person name="Ovchinnikova G."/>
            <person name="Goodwin L."/>
            <person name="Han C."/>
        </authorList>
    </citation>
    <scope>NUCLEOTIDE SEQUENCE [LARGE SCALE GENOMIC DNA]</scope>
    <source>
        <strain>S110</strain>
    </source>
</reference>
<proteinExistence type="inferred from homology"/>
<comment type="subunit">
    <text evidence="1">Part of the 50S ribosomal subunit. Contacts protein L32.</text>
</comment>
<comment type="similarity">
    <text evidence="1">Belongs to the bacterial ribosomal protein bL17 family.</text>
</comment>
<name>RL17_VARPS</name>
<sequence length="132" mass="14911">MRHGHGLRKLNRTSSHRLAMLQNMMNSLIEHEVIKTTVPKAKELRRVIEPMITLAKKPTVANKRLAFDRLRDRDSVVKLFGELGPRFAARPGGYTRILKMGFRVGDNAPMALVELVDRPEIKEEAAEQGAAE</sequence>
<protein>
    <recommendedName>
        <fullName evidence="1">Large ribosomal subunit protein bL17</fullName>
    </recommendedName>
    <alternativeName>
        <fullName evidence="2">50S ribosomal protein L17</fullName>
    </alternativeName>
</protein>
<feature type="chain" id="PRO_1000215022" description="Large ribosomal subunit protein bL17">
    <location>
        <begin position="1"/>
        <end position="132"/>
    </location>
</feature>
<accession>C5CQ74</accession>
<gene>
    <name evidence="1" type="primary">rplQ</name>
    <name type="ordered locus">Vapar_5044</name>
</gene>